<reference key="1">
    <citation type="journal article" date="2008" name="PLoS Genet.">
        <title>Complete genome sequence of the N2-fixing broad host range endophyte Klebsiella pneumoniae 342 and virulence predictions verified in mice.</title>
        <authorList>
            <person name="Fouts D.E."/>
            <person name="Tyler H.L."/>
            <person name="DeBoy R.T."/>
            <person name="Daugherty S."/>
            <person name="Ren Q."/>
            <person name="Badger J.H."/>
            <person name="Durkin A.S."/>
            <person name="Huot H."/>
            <person name="Shrivastava S."/>
            <person name="Kothari S."/>
            <person name="Dodson R.J."/>
            <person name="Mohamoud Y."/>
            <person name="Khouri H."/>
            <person name="Roesch L.F.W."/>
            <person name="Krogfelt K.A."/>
            <person name="Struve C."/>
            <person name="Triplett E.W."/>
            <person name="Methe B.A."/>
        </authorList>
    </citation>
    <scope>NUCLEOTIDE SEQUENCE [LARGE SCALE GENOMIC DNA]</scope>
    <source>
        <strain>342</strain>
    </source>
</reference>
<dbReference type="EC" id="2.7.11.5" evidence="1"/>
<dbReference type="EC" id="3.1.3.-" evidence="1"/>
<dbReference type="EMBL" id="CP000964">
    <property type="protein sequence ID" value="ACI07745.1"/>
    <property type="molecule type" value="Genomic_DNA"/>
</dbReference>
<dbReference type="SMR" id="B5XYC7"/>
<dbReference type="KEGG" id="kpe:KPK_5277"/>
<dbReference type="HOGENOM" id="CLU_033804_1_1_6"/>
<dbReference type="Proteomes" id="UP000001734">
    <property type="component" value="Chromosome"/>
</dbReference>
<dbReference type="GO" id="GO:0005737">
    <property type="term" value="C:cytoplasm"/>
    <property type="evidence" value="ECO:0007669"/>
    <property type="project" value="UniProtKB-SubCell"/>
</dbReference>
<dbReference type="GO" id="GO:0008772">
    <property type="term" value="F:[isocitrate dehydrogenase (NADP+)] kinase activity"/>
    <property type="evidence" value="ECO:0007669"/>
    <property type="project" value="UniProtKB-UniRule"/>
</dbReference>
<dbReference type="GO" id="GO:0016208">
    <property type="term" value="F:AMP binding"/>
    <property type="evidence" value="ECO:0007669"/>
    <property type="project" value="TreeGrafter"/>
</dbReference>
<dbReference type="GO" id="GO:0005524">
    <property type="term" value="F:ATP binding"/>
    <property type="evidence" value="ECO:0007669"/>
    <property type="project" value="UniProtKB-UniRule"/>
</dbReference>
<dbReference type="GO" id="GO:0004721">
    <property type="term" value="F:phosphoprotein phosphatase activity"/>
    <property type="evidence" value="ECO:0007669"/>
    <property type="project" value="UniProtKB-KW"/>
</dbReference>
<dbReference type="GO" id="GO:0004674">
    <property type="term" value="F:protein serine/threonine kinase activity"/>
    <property type="evidence" value="ECO:0007669"/>
    <property type="project" value="UniProtKB-KW"/>
</dbReference>
<dbReference type="GO" id="GO:0006006">
    <property type="term" value="P:glucose metabolic process"/>
    <property type="evidence" value="ECO:0007669"/>
    <property type="project" value="InterPro"/>
</dbReference>
<dbReference type="GO" id="GO:0006097">
    <property type="term" value="P:glyoxylate cycle"/>
    <property type="evidence" value="ECO:0007669"/>
    <property type="project" value="UniProtKB-UniRule"/>
</dbReference>
<dbReference type="GO" id="GO:0006099">
    <property type="term" value="P:tricarboxylic acid cycle"/>
    <property type="evidence" value="ECO:0007669"/>
    <property type="project" value="UniProtKB-UniRule"/>
</dbReference>
<dbReference type="HAMAP" id="MF_00747">
    <property type="entry name" value="AceK"/>
    <property type="match status" value="1"/>
</dbReference>
<dbReference type="InterPro" id="IPR046855">
    <property type="entry name" value="AceK_kinase"/>
</dbReference>
<dbReference type="InterPro" id="IPR046854">
    <property type="entry name" value="AceK_regulatory"/>
</dbReference>
<dbReference type="InterPro" id="IPR010452">
    <property type="entry name" value="Isocitrate_DH_AceK"/>
</dbReference>
<dbReference type="NCBIfam" id="NF002804">
    <property type="entry name" value="PRK02946.1"/>
    <property type="match status" value="1"/>
</dbReference>
<dbReference type="PANTHER" id="PTHR39559">
    <property type="match status" value="1"/>
</dbReference>
<dbReference type="PANTHER" id="PTHR39559:SF1">
    <property type="entry name" value="ISOCITRATE DEHYDROGENASE KINASE_PHOSPHATASE"/>
    <property type="match status" value="1"/>
</dbReference>
<dbReference type="Pfam" id="PF06315">
    <property type="entry name" value="AceK_kinase"/>
    <property type="match status" value="1"/>
</dbReference>
<dbReference type="Pfam" id="PF20423">
    <property type="entry name" value="AceK_regulatory"/>
    <property type="match status" value="1"/>
</dbReference>
<dbReference type="PIRSF" id="PIRSF000719">
    <property type="entry name" value="AceK"/>
    <property type="match status" value="1"/>
</dbReference>
<gene>
    <name evidence="1" type="primary">aceK</name>
    <name type="ordered locus">KPK_5277</name>
</gene>
<comment type="function">
    <text evidence="1">Bifunctional enzyme which can phosphorylate or dephosphorylate isocitrate dehydrogenase (IDH) on a specific serine residue. This is a regulatory mechanism which enables bacteria to bypass the Krebs cycle via the glyoxylate shunt in response to the source of carbon. When bacteria are grown on glucose, IDH is fully active and unphosphorylated, but when grown on acetate or ethanol, the activity of IDH declines drastically concomitant with its phosphorylation.</text>
</comment>
<comment type="catalytic activity">
    <reaction evidence="1">
        <text>L-seryl-[isocitrate dehydrogenase] + ATP = O-phospho-L-seryl-[isocitrate dehydrogenase] + ADP + H(+)</text>
        <dbReference type="Rhea" id="RHEA:43540"/>
        <dbReference type="Rhea" id="RHEA-COMP:10605"/>
        <dbReference type="Rhea" id="RHEA-COMP:10606"/>
        <dbReference type="ChEBI" id="CHEBI:15378"/>
        <dbReference type="ChEBI" id="CHEBI:29999"/>
        <dbReference type="ChEBI" id="CHEBI:30616"/>
        <dbReference type="ChEBI" id="CHEBI:83421"/>
        <dbReference type="ChEBI" id="CHEBI:456216"/>
        <dbReference type="EC" id="2.7.11.5"/>
    </reaction>
</comment>
<comment type="subcellular location">
    <subcellularLocation>
        <location evidence="1">Cytoplasm</location>
    </subcellularLocation>
</comment>
<comment type="similarity">
    <text evidence="1">Belongs to the AceK family.</text>
</comment>
<keyword id="KW-0067">ATP-binding</keyword>
<keyword id="KW-0963">Cytoplasm</keyword>
<keyword id="KW-0329">Glyoxylate bypass</keyword>
<keyword id="KW-0378">Hydrolase</keyword>
<keyword id="KW-0418">Kinase</keyword>
<keyword id="KW-0547">Nucleotide-binding</keyword>
<keyword id="KW-0904">Protein phosphatase</keyword>
<keyword id="KW-0723">Serine/threonine-protein kinase</keyword>
<keyword id="KW-0808">Transferase</keyword>
<keyword id="KW-0816">Tricarboxylic acid cycle</keyword>
<evidence type="ECO:0000255" key="1">
    <source>
        <dbReference type="HAMAP-Rule" id="MF_00747"/>
    </source>
</evidence>
<accession>B5XYC7</accession>
<name>ACEK_KLEP3</name>
<protein>
    <recommendedName>
        <fullName evidence="1">Isocitrate dehydrogenase kinase/phosphatase</fullName>
        <shortName evidence="1">IDH kinase/phosphatase</shortName>
        <shortName evidence="1">IDHK/P</shortName>
        <ecNumber evidence="1">2.7.11.5</ecNumber>
        <ecNumber evidence="1">3.1.3.-</ecNumber>
    </recommendedName>
</protein>
<organism>
    <name type="scientific">Klebsiella pneumoniae (strain 342)</name>
    <dbReference type="NCBI Taxonomy" id="507522"/>
    <lineage>
        <taxon>Bacteria</taxon>
        <taxon>Pseudomonadati</taxon>
        <taxon>Pseudomonadota</taxon>
        <taxon>Gammaproteobacteria</taxon>
        <taxon>Enterobacterales</taxon>
        <taxon>Enterobacteriaceae</taxon>
        <taxon>Klebsiella/Raoultella group</taxon>
        <taxon>Klebsiella</taxon>
        <taxon>Klebsiella pneumoniae complex</taxon>
    </lineage>
</organism>
<proteinExistence type="inferred from homology"/>
<feature type="chain" id="PRO_1000133272" description="Isocitrate dehydrogenase kinase/phosphatase">
    <location>
        <begin position="1"/>
        <end position="594"/>
    </location>
</feature>
<feature type="active site" evidence="1">
    <location>
        <position position="371"/>
    </location>
</feature>
<feature type="binding site" evidence="1">
    <location>
        <begin position="315"/>
        <end position="321"/>
    </location>
    <ligand>
        <name>ATP</name>
        <dbReference type="ChEBI" id="CHEBI:30616"/>
    </ligand>
</feature>
<feature type="binding site" evidence="1">
    <location>
        <position position="336"/>
    </location>
    <ligand>
        <name>ATP</name>
        <dbReference type="ChEBI" id="CHEBI:30616"/>
    </ligand>
</feature>
<sequence>MTRGLELLIAQTILQGFDAQYGRFLEVTSGAQQRFEQADWHAVQQAMKQRIHLYDHHVGLVVEQLRCITEGKSTDVDFLLRVKQQYTQLLPDYPRFEIAESFFNSVYCRLFDHRSLTPERLFIFSSQPERPFRTLPRPLAKDFFPERGWSHLLGKVLSDLPLRLAWQNKARDIGYIIASLQEALGEELLATCHLQVANELFYRNKAAWLVGKLVMPMATLPFLLPIHRSDEGELFVDTCLTTHAEASIVFGFARSYFMVYAPLPGALVEWLREILPGKTTAELYMAIGCQKHAKTESYREYLHYITRCDEQFIEAPGIRGMVMLVFTLPGFDRVFKVIKDRFAPQKEVTAAHVRACYQLVKEHDRVGRMADTQEFENFVLDKRQIAPGLLALLQAEAGNKLTDLGDRIVISHLYIERRMVPLNLWLEQVNGQALRDAVEEYGNAIRQLAAANIFPGDMLFKNFGVTRHGRVVFYDYDEICYMTEVNFRQIPPPRYPEDELASEPWYSVSPGDVFPEEFRHWLCADPRIGPLFEEMHADLLRADYWRELQTRIKNGHVEDVYAYRRKQRFSVRYGADSRPDKVFTPPSGRVRRSA</sequence>